<protein>
    <recommendedName>
        <fullName>Uronate dehydrogenase</fullName>
        <ecNumber evidence="2">1.1.1.203</ecNumber>
    </recommendedName>
    <alternativeName>
        <fullName>D-galacturonate dehydrogenase</fullName>
    </alternativeName>
    <alternativeName>
        <fullName>D-glucuronate dehydrogenase</fullName>
    </alternativeName>
    <alternativeName>
        <fullName>Hexuronate dehydrogenase</fullName>
    </alternativeName>
</protein>
<organism>
    <name type="scientific">Pseudomonas putida (strain ATCC 47054 / DSM 6125 / CFBP 8728 / NCIMB 11950 / KT2440)</name>
    <dbReference type="NCBI Taxonomy" id="160488"/>
    <lineage>
        <taxon>Bacteria</taxon>
        <taxon>Pseudomonadati</taxon>
        <taxon>Pseudomonadota</taxon>
        <taxon>Gammaproteobacteria</taxon>
        <taxon>Pseudomonadales</taxon>
        <taxon>Pseudomonadaceae</taxon>
        <taxon>Pseudomonas</taxon>
    </lineage>
</organism>
<sequence>MTTTPFNRLLLTGAAGGLGKVLRERLKGYAEVLRLSDISPMAPAAGPHEEVITCDLADKAAVHTLVEGVDAIIHFGGVSTEHAFEEILGPNICGVFHVYEAARKHGVKRIIFASSNHTIGFYRQDERIDAHAPRRPDSYYGLSKCYGEDVASFYFDRYGIETVSIRIGSSFPQPQNLRMLCTWLSYDDLVQLIERGLFTPGVGHTIVYGASDNRTVWWDNRHAAHLGYVPKDSSETFRAAVEAQPAPAADDPSMVYQGGAFAVAGPFN</sequence>
<feature type="chain" id="PRO_0000429436" description="Uronate dehydrogenase">
    <location>
        <begin position="1"/>
        <end position="268"/>
    </location>
</feature>
<feature type="active site" description="Proton acceptor" evidence="1">
    <location>
        <position position="140"/>
    </location>
</feature>
<feature type="binding site" evidence="1">
    <location>
        <begin position="17"/>
        <end position="18"/>
    </location>
    <ligand>
        <name>NAD(+)</name>
        <dbReference type="ChEBI" id="CHEBI:57540"/>
    </ligand>
</feature>
<feature type="binding site" evidence="1">
    <location>
        <begin position="37"/>
        <end position="39"/>
    </location>
    <ligand>
        <name>NAD(+)</name>
        <dbReference type="ChEBI" id="CHEBI:57540"/>
    </ligand>
</feature>
<feature type="binding site" evidence="1">
    <location>
        <begin position="55"/>
        <end position="56"/>
    </location>
    <ligand>
        <name>NAD(+)</name>
        <dbReference type="ChEBI" id="CHEBI:57540"/>
    </ligand>
</feature>
<feature type="binding site" evidence="1">
    <location>
        <begin position="75"/>
        <end position="79"/>
    </location>
    <ligand>
        <name>NAD(+)</name>
        <dbReference type="ChEBI" id="CHEBI:57540"/>
    </ligand>
</feature>
<feature type="binding site" evidence="1">
    <location>
        <position position="79"/>
    </location>
    <ligand>
        <name>substrate</name>
    </ligand>
</feature>
<feature type="binding site" evidence="1">
    <location>
        <begin position="115"/>
        <end position="117"/>
    </location>
    <ligand>
        <name>substrate</name>
    </ligand>
</feature>
<feature type="binding site" evidence="1">
    <location>
        <position position="144"/>
    </location>
    <ligand>
        <name>NAD(+)</name>
        <dbReference type="ChEBI" id="CHEBI:57540"/>
    </ligand>
</feature>
<feature type="binding site" evidence="1">
    <location>
        <position position="169"/>
    </location>
    <ligand>
        <name>substrate</name>
    </ligand>
</feature>
<feature type="binding site" evidence="1">
    <location>
        <position position="170"/>
    </location>
    <ligand>
        <name>NAD(+)</name>
        <dbReference type="ChEBI" id="CHEBI:57540"/>
    </ligand>
</feature>
<feature type="binding site" evidence="1">
    <location>
        <position position="178"/>
    </location>
    <ligand>
        <name>substrate</name>
    </ligand>
</feature>
<dbReference type="EC" id="1.1.1.203" evidence="2"/>
<dbReference type="EMBL" id="BK006380">
    <property type="protein sequence ID" value="DAA06455.1"/>
    <property type="molecule type" value="Genomic_DNA"/>
</dbReference>
<dbReference type="EMBL" id="AE015451">
    <property type="protein sequence ID" value="AAN66795.1"/>
    <property type="molecule type" value="Genomic_DNA"/>
</dbReference>
<dbReference type="RefSeq" id="NP_743331.1">
    <property type="nucleotide sequence ID" value="NC_002947.4"/>
</dbReference>
<dbReference type="RefSeq" id="WP_010952325.1">
    <property type="nucleotide sequence ID" value="NZ_CP169744.1"/>
</dbReference>
<dbReference type="SMR" id="Q88NN6"/>
<dbReference type="STRING" id="160488.PP_1171"/>
<dbReference type="PaxDb" id="160488-PP_1171"/>
<dbReference type="DNASU" id="1045739"/>
<dbReference type="KEGG" id="ppu:PP_1171"/>
<dbReference type="PATRIC" id="fig|160488.4.peg.1243"/>
<dbReference type="eggNOG" id="COG0451">
    <property type="taxonomic scope" value="Bacteria"/>
</dbReference>
<dbReference type="HOGENOM" id="CLU_079334_0_0_6"/>
<dbReference type="OrthoDB" id="8770295at2"/>
<dbReference type="PhylomeDB" id="Q88NN6"/>
<dbReference type="BioCyc" id="PPUT160488:G1G01-1254-MONOMER"/>
<dbReference type="BRENDA" id="1.1.1.203">
    <property type="organism ID" value="10905"/>
</dbReference>
<dbReference type="UniPathway" id="UPA01050"/>
<dbReference type="Proteomes" id="UP000000556">
    <property type="component" value="Chromosome"/>
</dbReference>
<dbReference type="GO" id="GO:0000166">
    <property type="term" value="F:nucleotide binding"/>
    <property type="evidence" value="ECO:0007669"/>
    <property type="project" value="UniProtKB-KW"/>
</dbReference>
<dbReference type="GO" id="GO:0050388">
    <property type="term" value="F:uronate dehydrogenase activity"/>
    <property type="evidence" value="ECO:0007669"/>
    <property type="project" value="UniProtKB-EC"/>
</dbReference>
<dbReference type="Gene3D" id="3.40.50.720">
    <property type="entry name" value="NAD(P)-binding Rossmann-like Domain"/>
    <property type="match status" value="1"/>
</dbReference>
<dbReference type="InterPro" id="IPR001509">
    <property type="entry name" value="Epimerase_deHydtase"/>
</dbReference>
<dbReference type="InterPro" id="IPR036291">
    <property type="entry name" value="NAD(P)-bd_dom_sf"/>
</dbReference>
<dbReference type="PANTHER" id="PTHR43103:SF5">
    <property type="entry name" value="4-EPIMERASE, PUTATIVE (AFU_ORTHOLOGUE AFUA_7G00360)-RELATED"/>
    <property type="match status" value="1"/>
</dbReference>
<dbReference type="PANTHER" id="PTHR43103">
    <property type="entry name" value="NUCLEOSIDE-DIPHOSPHATE-SUGAR EPIMERASE"/>
    <property type="match status" value="1"/>
</dbReference>
<dbReference type="Pfam" id="PF01370">
    <property type="entry name" value="Epimerase"/>
    <property type="match status" value="1"/>
</dbReference>
<dbReference type="SUPFAM" id="SSF51735">
    <property type="entry name" value="NAD(P)-binding Rossmann-fold domains"/>
    <property type="match status" value="1"/>
</dbReference>
<reference key="1">
    <citation type="journal article" date="2009" name="J. Bacteriol.">
        <title>Cloning and characterization of uronate dehydrogenases from two pseudomonads and Agrobacterium tumefaciens strain C58.</title>
        <authorList>
            <person name="Yoon S.H."/>
            <person name="Moon T.S."/>
            <person name="Iranpour P."/>
            <person name="Lanza A.M."/>
            <person name="Prather K.J."/>
        </authorList>
    </citation>
    <scope>NUCLEOTIDE SEQUENCE [GENOMIC DNA]</scope>
    <scope>IDENTIFICATION</scope>
    <scope>FUNCTION</scope>
    <scope>GENE NAME</scope>
    <scope>CATALYTIC ACTIVITY</scope>
    <scope>BIOPHYSICOCHEMICAL PROPERTIES</scope>
    <source>
        <strain>ATCC 47054 / DSM 6125 / CFBP 8728 / NCIMB 11950 / KT2440</strain>
    </source>
</reference>
<reference key="2">
    <citation type="journal article" date="2002" name="Environ. Microbiol.">
        <title>Complete genome sequence and comparative analysis of the metabolically versatile Pseudomonas putida KT2440.</title>
        <authorList>
            <person name="Nelson K.E."/>
            <person name="Weinel C."/>
            <person name="Paulsen I.T."/>
            <person name="Dodson R.J."/>
            <person name="Hilbert H."/>
            <person name="Martins dos Santos V.A.P."/>
            <person name="Fouts D.E."/>
            <person name="Gill S.R."/>
            <person name="Pop M."/>
            <person name="Holmes M."/>
            <person name="Brinkac L.M."/>
            <person name="Beanan M.J."/>
            <person name="DeBoy R.T."/>
            <person name="Daugherty S.C."/>
            <person name="Kolonay J.F."/>
            <person name="Madupu R."/>
            <person name="Nelson W.C."/>
            <person name="White O."/>
            <person name="Peterson J.D."/>
            <person name="Khouri H.M."/>
            <person name="Hance I."/>
            <person name="Chris Lee P."/>
            <person name="Holtzapple E.K."/>
            <person name="Scanlan D."/>
            <person name="Tran K."/>
            <person name="Moazzez A."/>
            <person name="Utterback T.R."/>
            <person name="Rizzo M."/>
            <person name="Lee K."/>
            <person name="Kosack D."/>
            <person name="Moestl D."/>
            <person name="Wedler H."/>
            <person name="Lauber J."/>
            <person name="Stjepandic D."/>
            <person name="Hoheisel J."/>
            <person name="Straetz M."/>
            <person name="Heim S."/>
            <person name="Kiewitz C."/>
            <person name="Eisen J.A."/>
            <person name="Timmis K.N."/>
            <person name="Duesterhoeft A."/>
            <person name="Tuemmler B."/>
            <person name="Fraser C.M."/>
        </authorList>
    </citation>
    <scope>NUCLEOTIDE SEQUENCE [LARGE SCALE GENOMIC DNA]</scope>
    <source>
        <strain>ATCC 47054 / DSM 6125 / CFBP 8728 / NCIMB 11950 / KT2440</strain>
    </source>
</reference>
<evidence type="ECO:0000250" key="1"/>
<evidence type="ECO:0000269" key="2">
    <source>
    </source>
</evidence>
<evidence type="ECO:0000305" key="3"/>
<proteinExistence type="evidence at protein level"/>
<keyword id="KW-0520">NAD</keyword>
<keyword id="KW-0547">Nucleotide-binding</keyword>
<keyword id="KW-0560">Oxidoreductase</keyword>
<keyword id="KW-1185">Reference proteome</keyword>
<accession>Q88NN6</accession>
<comment type="function">
    <text evidence="2">Catalyzes the oxidation of beta-D-galacturonate and beta-D-glucuronate to galactarate and D-glucarate, respectively.</text>
</comment>
<comment type="catalytic activity">
    <reaction evidence="2">
        <text>beta-D-galacturonate + NAD(+) = D-galactaro-1,5-lactone + NADH + H(+)</text>
        <dbReference type="Rhea" id="RHEA:22404"/>
        <dbReference type="ChEBI" id="CHEBI:15378"/>
        <dbReference type="ChEBI" id="CHEBI:57540"/>
        <dbReference type="ChEBI" id="CHEBI:57945"/>
        <dbReference type="ChEBI" id="CHEBI:83383"/>
        <dbReference type="ChEBI" id="CHEBI:85312"/>
        <dbReference type="EC" id="1.1.1.203"/>
    </reaction>
</comment>
<comment type="catalytic activity">
    <reaction evidence="2">
        <text>beta-D-glucuronate + NAD(+) = D-glucaro-1,5-lactone + NADH + H(+)</text>
        <dbReference type="Rhea" id="RHEA:43500"/>
        <dbReference type="ChEBI" id="CHEBI:15378"/>
        <dbReference type="ChEBI" id="CHEBI:57540"/>
        <dbReference type="ChEBI" id="CHEBI:57945"/>
        <dbReference type="ChEBI" id="CHEBI:83384"/>
        <dbReference type="ChEBI" id="CHEBI:85313"/>
        <dbReference type="EC" id="1.1.1.203"/>
    </reaction>
</comment>
<comment type="biophysicochemical properties">
    <kinetics>
        <KM evidence="2">0.25 mM for D-glucuronate</KM>
        <KM evidence="2">0.1 mM for D-galacturonate</KM>
        <KM evidence="2">0.21 mM for NAD(+)</KM>
        <text>kcat is 55 sec(-1) and 30 sec(-1) with D-glucuronate and D-galacturonate as substrate, respectively.</text>
    </kinetics>
    <phDependence>
        <text evidence="2">Optimum pH is about 7.</text>
    </phDependence>
    <temperatureDependence>
        <text evidence="2">Activity increases with increasing temperatures between 4 and 42 degrees Celsius. Activity is below 20% of the maximum after exposure at 37 degrees Celsius for 30 minutes.</text>
    </temperatureDependence>
</comment>
<comment type="pathway">
    <text>Carbohydrate acid metabolism; D-galacturonate degradation via prokaryotic oxidative pathway.</text>
</comment>
<comment type="subunit">
    <text evidence="1">Homohexamer.</text>
</comment>
<comment type="similarity">
    <text evidence="3">Belongs to the NAD(P)-dependent epimerase/dehydratase family.</text>
</comment>
<name>URODH_PSEPK</name>
<gene>
    <name type="primary">udh</name>
    <name type="ordered locus">PP_1171</name>
</gene>